<dbReference type="EMBL" id="CP000253">
    <property type="protein sequence ID" value="ABD31517.1"/>
    <property type="status" value="ALT_INIT"/>
    <property type="molecule type" value="Genomic_DNA"/>
</dbReference>
<dbReference type="RefSeq" id="WP_001140799.1">
    <property type="nucleotide sequence ID" value="NZ_LS483365.1"/>
</dbReference>
<dbReference type="PDB" id="5LI0">
    <property type="method" value="EM"/>
    <property type="resolution" value="3.80 A"/>
    <property type="chains" value="n=2-61"/>
</dbReference>
<dbReference type="PDB" id="5ND8">
    <property type="method" value="EM"/>
    <property type="resolution" value="3.70 A"/>
    <property type="chains" value="n=1-61"/>
</dbReference>
<dbReference type="PDB" id="5ND9">
    <property type="method" value="EM"/>
    <property type="resolution" value="3.70 A"/>
    <property type="chains" value="n=1-61"/>
</dbReference>
<dbReference type="PDB" id="5TCU">
    <property type="method" value="EM"/>
    <property type="resolution" value="3.90 A"/>
    <property type="chains" value="S5=2-61"/>
</dbReference>
<dbReference type="PDB" id="7BGE">
    <property type="method" value="EM"/>
    <property type="resolution" value="3.60 A"/>
    <property type="chains" value="n=1-61"/>
</dbReference>
<dbReference type="PDB" id="7KWG">
    <property type="method" value="EM"/>
    <property type="resolution" value="3.75 A"/>
    <property type="chains" value="n=1-61"/>
</dbReference>
<dbReference type="PDB" id="7NHL">
    <property type="method" value="EM"/>
    <property type="resolution" value="3.10 A"/>
    <property type="chains" value="o=1-61"/>
</dbReference>
<dbReference type="PDB" id="7NHM">
    <property type="method" value="EM"/>
    <property type="resolution" value="3.10 A"/>
    <property type="chains" value="o=1-61"/>
</dbReference>
<dbReference type="PDB" id="8BH6">
    <property type="method" value="EM"/>
    <property type="resolution" value="3.70 A"/>
    <property type="chains" value="n=1-61"/>
</dbReference>
<dbReference type="PDB" id="8BH7">
    <property type="method" value="EM"/>
    <property type="resolution" value="4.23 A"/>
    <property type="chains" value="n=1-61"/>
</dbReference>
<dbReference type="PDB" id="8BYV">
    <property type="method" value="EM"/>
    <property type="resolution" value="2.89 A"/>
    <property type="chains" value="n=1-61"/>
</dbReference>
<dbReference type="PDB" id="8P2F">
    <property type="method" value="EM"/>
    <property type="resolution" value="2.44 A"/>
    <property type="chains" value="o=1-61"/>
</dbReference>
<dbReference type="PDB" id="8P2G">
    <property type="method" value="EM"/>
    <property type="resolution" value="2.02 A"/>
    <property type="chains" value="o=1-61"/>
</dbReference>
<dbReference type="PDB" id="8P2H">
    <property type="method" value="EM"/>
    <property type="resolution" value="2.49 A"/>
    <property type="chains" value="o=1-61"/>
</dbReference>
<dbReference type="PDBsum" id="5LI0"/>
<dbReference type="PDBsum" id="5ND8"/>
<dbReference type="PDBsum" id="5ND9"/>
<dbReference type="PDBsum" id="5TCU"/>
<dbReference type="PDBsum" id="7BGE"/>
<dbReference type="PDBsum" id="7KWG"/>
<dbReference type="PDBsum" id="7NHL"/>
<dbReference type="PDBsum" id="7NHM"/>
<dbReference type="PDBsum" id="8BH6"/>
<dbReference type="PDBsum" id="8BH7"/>
<dbReference type="PDBsum" id="8BYV"/>
<dbReference type="PDBsum" id="8P2F"/>
<dbReference type="PDBsum" id="8P2G"/>
<dbReference type="PDBsum" id="8P2H"/>
<dbReference type="EMDB" id="EMD-12179"/>
<dbReference type="EMDB" id="EMD-12332"/>
<dbReference type="EMDB" id="EMD-12333"/>
<dbReference type="EMDB" id="EMD-16048"/>
<dbReference type="EMDB" id="EMD-16049"/>
<dbReference type="EMDB" id="EMD-16334"/>
<dbReference type="EMDB" id="EMD-17363"/>
<dbReference type="EMDB" id="EMD-17364"/>
<dbReference type="EMDB" id="EMD-17365"/>
<dbReference type="EMDB" id="EMD-23052"/>
<dbReference type="EMDB" id="EMD-3624"/>
<dbReference type="EMDB" id="EMD-3625"/>
<dbReference type="EMDB" id="EMD-4050"/>
<dbReference type="EMDB" id="EMD-8402"/>
<dbReference type="SMR" id="Q2FW19"/>
<dbReference type="IntAct" id="Q2FW19">
    <property type="interactions" value="1"/>
</dbReference>
<dbReference type="STRING" id="93061.SAOUHSC_02499"/>
<dbReference type="KEGG" id="sao:SAOUHSC_02499"/>
<dbReference type="PATRIC" id="fig|93061.5.peg.2254"/>
<dbReference type="HOGENOM" id="CLU_139869_3_0_9"/>
<dbReference type="OrthoDB" id="9810484at2"/>
<dbReference type="PRO" id="PR:Q2FW19"/>
<dbReference type="Proteomes" id="UP000008816">
    <property type="component" value="Chromosome"/>
</dbReference>
<dbReference type="GO" id="GO:0015935">
    <property type="term" value="C:small ribosomal subunit"/>
    <property type="evidence" value="ECO:0000318"/>
    <property type="project" value="GO_Central"/>
</dbReference>
<dbReference type="GO" id="GO:0019843">
    <property type="term" value="F:rRNA binding"/>
    <property type="evidence" value="ECO:0007669"/>
    <property type="project" value="UniProtKB-UniRule"/>
</dbReference>
<dbReference type="GO" id="GO:0003735">
    <property type="term" value="F:structural constituent of ribosome"/>
    <property type="evidence" value="ECO:0000318"/>
    <property type="project" value="GO_Central"/>
</dbReference>
<dbReference type="GO" id="GO:0008270">
    <property type="term" value="F:zinc ion binding"/>
    <property type="evidence" value="ECO:0007669"/>
    <property type="project" value="UniProtKB-UniRule"/>
</dbReference>
<dbReference type="GO" id="GO:0006412">
    <property type="term" value="P:translation"/>
    <property type="evidence" value="ECO:0000318"/>
    <property type="project" value="GO_Central"/>
</dbReference>
<dbReference type="FunFam" id="4.10.830.10:FF:000001">
    <property type="entry name" value="30S ribosomal protein S14 type Z"/>
    <property type="match status" value="1"/>
</dbReference>
<dbReference type="Gene3D" id="4.10.830.10">
    <property type="entry name" value="30s Ribosomal Protein S14, Chain N"/>
    <property type="match status" value="1"/>
</dbReference>
<dbReference type="HAMAP" id="MF_01364_B">
    <property type="entry name" value="Ribosomal_uS14_2_B"/>
    <property type="match status" value="1"/>
</dbReference>
<dbReference type="InterPro" id="IPR001209">
    <property type="entry name" value="Ribosomal_uS14"/>
</dbReference>
<dbReference type="InterPro" id="IPR023053">
    <property type="entry name" value="Ribosomal_uS14_bact"/>
</dbReference>
<dbReference type="InterPro" id="IPR018271">
    <property type="entry name" value="Ribosomal_uS14_CS"/>
</dbReference>
<dbReference type="InterPro" id="IPR043140">
    <property type="entry name" value="Ribosomal_uS14_sf"/>
</dbReference>
<dbReference type="NCBIfam" id="NF005974">
    <property type="entry name" value="PRK08061.1"/>
    <property type="match status" value="1"/>
</dbReference>
<dbReference type="PANTHER" id="PTHR19836">
    <property type="entry name" value="30S RIBOSOMAL PROTEIN S14"/>
    <property type="match status" value="1"/>
</dbReference>
<dbReference type="PANTHER" id="PTHR19836:SF26">
    <property type="entry name" value="SMALL RIBOSOMAL SUBUNIT PROTEIN US14B"/>
    <property type="match status" value="1"/>
</dbReference>
<dbReference type="Pfam" id="PF00253">
    <property type="entry name" value="Ribosomal_S14"/>
    <property type="match status" value="1"/>
</dbReference>
<dbReference type="SUPFAM" id="SSF57716">
    <property type="entry name" value="Glucocorticoid receptor-like (DNA-binding domain)"/>
    <property type="match status" value="1"/>
</dbReference>
<dbReference type="PROSITE" id="PS00527">
    <property type="entry name" value="RIBOSOMAL_S14"/>
    <property type="match status" value="1"/>
</dbReference>
<sequence>MAKTSMVAKQQKKQKYAVREYTRCERCGRPHSVYRKFKLCRICFRELAYKGQIPGVRKASW</sequence>
<feature type="chain" id="PRO_0000269135" description="Small ribosomal subunit protein uS14B">
    <location>
        <begin position="1"/>
        <end position="61"/>
    </location>
</feature>
<feature type="binding site" evidence="1">
    <location>
        <position position="24"/>
    </location>
    <ligand>
        <name>Zn(2+)</name>
        <dbReference type="ChEBI" id="CHEBI:29105"/>
    </ligand>
</feature>
<feature type="binding site" evidence="1">
    <location>
        <position position="27"/>
    </location>
    <ligand>
        <name>Zn(2+)</name>
        <dbReference type="ChEBI" id="CHEBI:29105"/>
    </ligand>
</feature>
<feature type="binding site" evidence="1">
    <location>
        <position position="40"/>
    </location>
    <ligand>
        <name>Zn(2+)</name>
        <dbReference type="ChEBI" id="CHEBI:29105"/>
    </ligand>
</feature>
<feature type="binding site" evidence="1">
    <location>
        <position position="43"/>
    </location>
    <ligand>
        <name>Zn(2+)</name>
        <dbReference type="ChEBI" id="CHEBI:29105"/>
    </ligand>
</feature>
<feature type="helix" evidence="3">
    <location>
        <begin position="3"/>
        <end position="9"/>
    </location>
</feature>
<feature type="strand" evidence="3">
    <location>
        <begin position="15"/>
        <end position="18"/>
    </location>
</feature>
<feature type="strand" evidence="3">
    <location>
        <begin position="25"/>
        <end position="27"/>
    </location>
</feature>
<feature type="strand" evidence="3">
    <location>
        <begin position="31"/>
        <end position="34"/>
    </location>
</feature>
<feature type="turn" evidence="3">
    <location>
        <begin position="35"/>
        <end position="38"/>
    </location>
</feature>
<feature type="helix" evidence="3">
    <location>
        <begin position="41"/>
        <end position="50"/>
    </location>
</feature>
<accession>Q2FW19</accession>
<organism>
    <name type="scientific">Staphylococcus aureus (strain NCTC 8325 / PS 47)</name>
    <dbReference type="NCBI Taxonomy" id="93061"/>
    <lineage>
        <taxon>Bacteria</taxon>
        <taxon>Bacillati</taxon>
        <taxon>Bacillota</taxon>
        <taxon>Bacilli</taxon>
        <taxon>Bacillales</taxon>
        <taxon>Staphylococcaceae</taxon>
        <taxon>Staphylococcus</taxon>
    </lineage>
</organism>
<evidence type="ECO:0000255" key="1">
    <source>
        <dbReference type="HAMAP-Rule" id="MF_01364"/>
    </source>
</evidence>
<evidence type="ECO:0000305" key="2"/>
<evidence type="ECO:0007829" key="3">
    <source>
        <dbReference type="PDB" id="8BYV"/>
    </source>
</evidence>
<keyword id="KW-0002">3D-structure</keyword>
<keyword id="KW-0479">Metal-binding</keyword>
<keyword id="KW-1185">Reference proteome</keyword>
<keyword id="KW-0687">Ribonucleoprotein</keyword>
<keyword id="KW-0689">Ribosomal protein</keyword>
<keyword id="KW-0694">RNA-binding</keyword>
<keyword id="KW-0699">rRNA-binding</keyword>
<keyword id="KW-0862">Zinc</keyword>
<gene>
    <name evidence="1" type="primary">rpsZ</name>
    <name evidence="1" type="synonym">rpsN1</name>
    <name type="ordered locus">SAOUHSC_02499</name>
</gene>
<comment type="function">
    <text evidence="1">Binds 16S rRNA, required for the assembly of 30S particles and may also be responsible for determining the conformation of the 16S rRNA at the A site.</text>
</comment>
<comment type="cofactor">
    <cofactor evidence="1">
        <name>Zn(2+)</name>
        <dbReference type="ChEBI" id="CHEBI:29105"/>
    </cofactor>
    <text evidence="1">Binds 1 zinc ion per subunit.</text>
</comment>
<comment type="subunit">
    <text evidence="1">Part of the 30S ribosomal subunit. Contacts proteins S3 and S10.</text>
</comment>
<comment type="similarity">
    <text evidence="1">Belongs to the universal ribosomal protein uS14 family. Zinc-binding uS14 subfamily.</text>
</comment>
<comment type="sequence caution" evidence="2">
    <conflict type="erroneous initiation">
        <sequence resource="EMBL-CDS" id="ABD31517"/>
    </conflict>
    <text>Truncated N-terminus.</text>
</comment>
<proteinExistence type="evidence at protein level"/>
<name>RS14Z_STAA8</name>
<reference key="1">
    <citation type="book" date="2006" name="Gram positive pathogens, 2nd edition">
        <title>The Staphylococcus aureus NCTC 8325 genome.</title>
        <editorList>
            <person name="Fischetti V."/>
            <person name="Novick R."/>
            <person name="Ferretti J."/>
            <person name="Portnoy D."/>
            <person name="Rood J."/>
        </editorList>
        <authorList>
            <person name="Gillaspy A.F."/>
            <person name="Worrell V."/>
            <person name="Orvis J."/>
            <person name="Roe B.A."/>
            <person name="Dyer D.W."/>
            <person name="Iandolo J.J."/>
        </authorList>
    </citation>
    <scope>NUCLEOTIDE SEQUENCE [LARGE SCALE GENOMIC DNA]</scope>
    <source>
        <strain>NCTC 8325 / PS 47</strain>
    </source>
</reference>
<protein>
    <recommendedName>
        <fullName evidence="1">Small ribosomal subunit protein uS14B</fullName>
    </recommendedName>
    <alternativeName>
        <fullName evidence="2">30S ribosomal protein S14 type Z</fullName>
    </alternativeName>
</protein>